<evidence type="ECO:0000255" key="1">
    <source>
        <dbReference type="HAMAP-Rule" id="MF_00406"/>
    </source>
</evidence>
<feature type="chain" id="PRO_1000134682" description="3-hydroxyacyl-[acyl-carrier-protein] dehydratase FabZ">
    <location>
        <begin position="1"/>
        <end position="156"/>
    </location>
</feature>
<feature type="active site" evidence="1">
    <location>
        <position position="57"/>
    </location>
</feature>
<reference key="1">
    <citation type="submission" date="2009-01" db="EMBL/GenBank/DDBJ databases">
        <title>Complete sequence of Anaeromyxobacter dehalogenans 2CP-1.</title>
        <authorList>
            <person name="Lucas S."/>
            <person name="Copeland A."/>
            <person name="Lapidus A."/>
            <person name="Glavina del Rio T."/>
            <person name="Dalin E."/>
            <person name="Tice H."/>
            <person name="Bruce D."/>
            <person name="Goodwin L."/>
            <person name="Pitluck S."/>
            <person name="Saunders E."/>
            <person name="Brettin T."/>
            <person name="Detter J.C."/>
            <person name="Han C."/>
            <person name="Larimer F."/>
            <person name="Land M."/>
            <person name="Hauser L."/>
            <person name="Kyrpides N."/>
            <person name="Ovchinnikova G."/>
            <person name="Beliaev A.S."/>
            <person name="Richardson P."/>
        </authorList>
    </citation>
    <scope>NUCLEOTIDE SEQUENCE [LARGE SCALE GENOMIC DNA]</scope>
    <source>
        <strain>2CP-1 / ATCC BAA-258</strain>
    </source>
</reference>
<accession>B8JFW8</accession>
<gene>
    <name evidence="1" type="primary">fabZ</name>
    <name type="ordered locus">A2cp1_1212</name>
</gene>
<comment type="function">
    <text evidence="1">Involved in unsaturated fatty acids biosynthesis. Catalyzes the dehydration of short chain beta-hydroxyacyl-ACPs and long chain saturated and unsaturated beta-hydroxyacyl-ACPs.</text>
</comment>
<comment type="catalytic activity">
    <reaction evidence="1">
        <text>a (3R)-hydroxyacyl-[ACP] = a (2E)-enoyl-[ACP] + H2O</text>
        <dbReference type="Rhea" id="RHEA:13097"/>
        <dbReference type="Rhea" id="RHEA-COMP:9925"/>
        <dbReference type="Rhea" id="RHEA-COMP:9945"/>
        <dbReference type="ChEBI" id="CHEBI:15377"/>
        <dbReference type="ChEBI" id="CHEBI:78784"/>
        <dbReference type="ChEBI" id="CHEBI:78827"/>
        <dbReference type="EC" id="4.2.1.59"/>
    </reaction>
</comment>
<comment type="subcellular location">
    <subcellularLocation>
        <location evidence="1">Cytoplasm</location>
    </subcellularLocation>
</comment>
<comment type="similarity">
    <text evidence="1">Belongs to the thioester dehydratase family. FabZ subfamily.</text>
</comment>
<sequence length="156" mass="17342">MSESAERKSILDVVGIQKLLPHRPPFLLVDRVVEFEAHRRLVALKGVTMNEPFFQGHFPAQPVMPGVLILEALAQAAALLATMSLQPDEVKDKITYLMGIDGARFRRPVVPGDRLELEVEVTKQKGAVWKQTGVARVDGQVVAEAEFMAMLADRER</sequence>
<name>FABZ_ANAD2</name>
<organism>
    <name type="scientific">Anaeromyxobacter dehalogenans (strain 2CP-1 / ATCC BAA-258)</name>
    <dbReference type="NCBI Taxonomy" id="455488"/>
    <lineage>
        <taxon>Bacteria</taxon>
        <taxon>Pseudomonadati</taxon>
        <taxon>Myxococcota</taxon>
        <taxon>Myxococcia</taxon>
        <taxon>Myxococcales</taxon>
        <taxon>Cystobacterineae</taxon>
        <taxon>Anaeromyxobacteraceae</taxon>
        <taxon>Anaeromyxobacter</taxon>
    </lineage>
</organism>
<proteinExistence type="inferred from homology"/>
<dbReference type="EC" id="4.2.1.59" evidence="1"/>
<dbReference type="EMBL" id="CP001359">
    <property type="protein sequence ID" value="ACL64556.1"/>
    <property type="molecule type" value="Genomic_DNA"/>
</dbReference>
<dbReference type="RefSeq" id="WP_012632543.1">
    <property type="nucleotide sequence ID" value="NC_011891.1"/>
</dbReference>
<dbReference type="SMR" id="B8JFW8"/>
<dbReference type="KEGG" id="acp:A2cp1_1212"/>
<dbReference type="HOGENOM" id="CLU_078912_3_0_7"/>
<dbReference type="Proteomes" id="UP000007089">
    <property type="component" value="Chromosome"/>
</dbReference>
<dbReference type="GO" id="GO:0005737">
    <property type="term" value="C:cytoplasm"/>
    <property type="evidence" value="ECO:0007669"/>
    <property type="project" value="UniProtKB-SubCell"/>
</dbReference>
<dbReference type="GO" id="GO:0016020">
    <property type="term" value="C:membrane"/>
    <property type="evidence" value="ECO:0007669"/>
    <property type="project" value="GOC"/>
</dbReference>
<dbReference type="GO" id="GO:0019171">
    <property type="term" value="F:(3R)-hydroxyacyl-[acyl-carrier-protein] dehydratase activity"/>
    <property type="evidence" value="ECO:0007669"/>
    <property type="project" value="UniProtKB-EC"/>
</dbReference>
<dbReference type="GO" id="GO:0006633">
    <property type="term" value="P:fatty acid biosynthetic process"/>
    <property type="evidence" value="ECO:0007669"/>
    <property type="project" value="UniProtKB-UniRule"/>
</dbReference>
<dbReference type="GO" id="GO:0009245">
    <property type="term" value="P:lipid A biosynthetic process"/>
    <property type="evidence" value="ECO:0007669"/>
    <property type="project" value="UniProtKB-UniRule"/>
</dbReference>
<dbReference type="CDD" id="cd01288">
    <property type="entry name" value="FabZ"/>
    <property type="match status" value="1"/>
</dbReference>
<dbReference type="FunFam" id="3.10.129.10:FF:000001">
    <property type="entry name" value="3-hydroxyacyl-[acyl-carrier-protein] dehydratase FabZ"/>
    <property type="match status" value="1"/>
</dbReference>
<dbReference type="Gene3D" id="3.10.129.10">
    <property type="entry name" value="Hotdog Thioesterase"/>
    <property type="match status" value="1"/>
</dbReference>
<dbReference type="HAMAP" id="MF_00406">
    <property type="entry name" value="FabZ"/>
    <property type="match status" value="1"/>
</dbReference>
<dbReference type="InterPro" id="IPR013114">
    <property type="entry name" value="FabA_FabZ"/>
</dbReference>
<dbReference type="InterPro" id="IPR010084">
    <property type="entry name" value="FabZ"/>
</dbReference>
<dbReference type="InterPro" id="IPR029069">
    <property type="entry name" value="HotDog_dom_sf"/>
</dbReference>
<dbReference type="NCBIfam" id="TIGR01750">
    <property type="entry name" value="fabZ"/>
    <property type="match status" value="1"/>
</dbReference>
<dbReference type="NCBIfam" id="NF000582">
    <property type="entry name" value="PRK00006.1"/>
    <property type="match status" value="1"/>
</dbReference>
<dbReference type="PANTHER" id="PTHR30272">
    <property type="entry name" value="3-HYDROXYACYL-[ACYL-CARRIER-PROTEIN] DEHYDRATASE"/>
    <property type="match status" value="1"/>
</dbReference>
<dbReference type="PANTHER" id="PTHR30272:SF1">
    <property type="entry name" value="3-HYDROXYACYL-[ACYL-CARRIER-PROTEIN] DEHYDRATASE"/>
    <property type="match status" value="1"/>
</dbReference>
<dbReference type="Pfam" id="PF07977">
    <property type="entry name" value="FabA"/>
    <property type="match status" value="1"/>
</dbReference>
<dbReference type="SUPFAM" id="SSF54637">
    <property type="entry name" value="Thioesterase/thiol ester dehydrase-isomerase"/>
    <property type="match status" value="1"/>
</dbReference>
<keyword id="KW-0963">Cytoplasm</keyword>
<keyword id="KW-0441">Lipid A biosynthesis</keyword>
<keyword id="KW-0444">Lipid biosynthesis</keyword>
<keyword id="KW-0443">Lipid metabolism</keyword>
<keyword id="KW-0456">Lyase</keyword>
<protein>
    <recommendedName>
        <fullName evidence="1">3-hydroxyacyl-[acyl-carrier-protein] dehydratase FabZ</fullName>
        <ecNumber evidence="1">4.2.1.59</ecNumber>
    </recommendedName>
    <alternativeName>
        <fullName evidence="1">(3R)-hydroxymyristoyl-[acyl-carrier-protein] dehydratase</fullName>
        <shortName evidence="1">(3R)-hydroxymyristoyl-ACP dehydrase</shortName>
    </alternativeName>
    <alternativeName>
        <fullName evidence="1">Beta-hydroxyacyl-ACP dehydratase</fullName>
    </alternativeName>
</protein>